<comment type="function">
    <text evidence="1 4">Cholesterol-binding protein involved in the redistribution of cholesterol from lipid droplets to the endoplasmic reticulum (PubMed:32358067). Required to meet cholesterol demands during erythropoietic differentiation (PubMed:32358067). May play a role in transport processes at the plasma membrane of erythrocytes, including regulating VDAC-mediated ATP export, and import of the heme precursors protoporphyrin IX and 5-aminolevulinic acid (By similarity).</text>
</comment>
<comment type="subunit">
    <text evidence="1">Homotetramer. May also form homodimer.</text>
</comment>
<comment type="subcellular location">
    <subcellularLocation>
        <location evidence="1">Endoplasmic reticulum membrane</location>
        <topology evidence="3">Multi-pass membrane protein</topology>
    </subcellularLocation>
    <subcellularLocation>
        <location evidence="4">Cell membrane</location>
        <topology evidence="3">Multi-pass membrane protein</topology>
    </subcellularLocation>
    <text evidence="1">Localizes to the plasma membrane and intracellular membranes in developing and mature erythrocytes.</text>
</comment>
<comment type="tissue specificity">
    <text evidence="4">Expressed in erythrocytes (at protein level).</text>
</comment>
<comment type="domain">
    <text evidence="2">The C-terminal region mediates cholesterol-binding.</text>
</comment>
<comment type="disease">
    <text evidence="4">Defects in TSPO2 functioning alter the cation composition of canine erythrocytes so that they are high in potassium and low in sodium (HK phenotype) (PubMed:32358067). Although HK erythrocytes have a tendency to hemolyze they do not cause serious disease, but the phenotype may lead to misdiagnosis of hyperkalemia in HK canines and blood transfusions using HK blood may induce hyperkalemia (PubMed:32358067). This phenotype has been identified in the Shiba breed (PubMed:32358067).</text>
</comment>
<comment type="similarity">
    <text evidence="6">Belongs to the TspO/BZRP family.</text>
</comment>
<organism evidence="10">
    <name type="scientific">Canis lupus familiaris</name>
    <name type="common">Dog</name>
    <name type="synonym">Canis familiaris</name>
    <dbReference type="NCBI Taxonomy" id="9615"/>
    <lineage>
        <taxon>Eukaryota</taxon>
        <taxon>Metazoa</taxon>
        <taxon>Chordata</taxon>
        <taxon>Craniata</taxon>
        <taxon>Vertebrata</taxon>
        <taxon>Euteleostomi</taxon>
        <taxon>Mammalia</taxon>
        <taxon>Eutheria</taxon>
        <taxon>Laurasiatheria</taxon>
        <taxon>Carnivora</taxon>
        <taxon>Caniformia</taxon>
        <taxon>Canidae</taxon>
        <taxon>Canis</taxon>
    </lineage>
</organism>
<dbReference type="EMBL" id="MN397823">
    <property type="protein sequence ID" value="QJD20749.1"/>
    <property type="molecule type" value="mRNA"/>
</dbReference>
<dbReference type="EMBL" id="MN397824">
    <property type="protein sequence ID" value="QJD20750.1"/>
    <property type="molecule type" value="mRNA"/>
</dbReference>
<dbReference type="EMBL" id="MN397825">
    <property type="protein sequence ID" value="QJD20751.1"/>
    <property type="molecule type" value="mRNA"/>
</dbReference>
<dbReference type="EMBL" id="AAEX03008323">
    <property type="status" value="NOT_ANNOTATED_CDS"/>
    <property type="molecule type" value="Genomic_DNA"/>
</dbReference>
<dbReference type="RefSeq" id="XP_022281477.1">
    <property type="nucleotide sequence ID" value="XM_022425769.2"/>
</dbReference>
<dbReference type="RefSeq" id="XP_038409252.1">
    <property type="nucleotide sequence ID" value="XM_038553324.1"/>
</dbReference>
<dbReference type="RefSeq" id="XP_038538713.1">
    <property type="nucleotide sequence ID" value="XM_038682785.1"/>
</dbReference>
<dbReference type="SMR" id="E2RDM9"/>
<dbReference type="STRING" id="9615.ENSCAFP00000002289"/>
<dbReference type="PaxDb" id="9612-ENSCAFP00000002289"/>
<dbReference type="Ensembl" id="ENSCAFT00000002469.4">
    <property type="protein sequence ID" value="ENSCAFP00000002289.2"/>
    <property type="gene ID" value="ENSCAFG00000001574.4"/>
</dbReference>
<dbReference type="Ensembl" id="ENSCAFT00030012352.1">
    <property type="protein sequence ID" value="ENSCAFP00030010806.1"/>
    <property type="gene ID" value="ENSCAFG00030006716.1"/>
</dbReference>
<dbReference type="Ensembl" id="ENSCAFT00040043569.1">
    <property type="protein sequence ID" value="ENSCAFP00040038005.1"/>
    <property type="gene ID" value="ENSCAFG00040023442.1"/>
</dbReference>
<dbReference type="Ensembl" id="ENSCAFT00845026413.1">
    <property type="protein sequence ID" value="ENSCAFP00845020815.1"/>
    <property type="gene ID" value="ENSCAFG00845014773.1"/>
</dbReference>
<dbReference type="GeneID" id="481787"/>
<dbReference type="VEuPathDB" id="HostDB:ENSCAFG00845014773"/>
<dbReference type="VGNC" id="VGNC:49105">
    <property type="gene designation" value="TSPO2"/>
</dbReference>
<dbReference type="eggNOG" id="KOG3797">
    <property type="taxonomic scope" value="Eukaryota"/>
</dbReference>
<dbReference type="GeneTree" id="ENSGT00390000012980"/>
<dbReference type="HOGENOM" id="CLU_091805_2_1_1"/>
<dbReference type="InParanoid" id="E2RDM9"/>
<dbReference type="OMA" id="RDSLCPE"/>
<dbReference type="OrthoDB" id="8841220at2759"/>
<dbReference type="TreeFam" id="TF342852"/>
<dbReference type="Proteomes" id="UP000002254">
    <property type="component" value="Chromosome 12"/>
</dbReference>
<dbReference type="Proteomes" id="UP000694429">
    <property type="component" value="Chromosome 12"/>
</dbReference>
<dbReference type="Proteomes" id="UP000694542">
    <property type="component" value="Chromosome 12"/>
</dbReference>
<dbReference type="Proteomes" id="UP000805418">
    <property type="component" value="Chromosome 12"/>
</dbReference>
<dbReference type="Bgee" id="ENSCAFG00000001574">
    <property type="expression patterns" value="Expressed in bone marrow and 4 other cell types or tissues"/>
</dbReference>
<dbReference type="GO" id="GO:0005789">
    <property type="term" value="C:endoplasmic reticulum membrane"/>
    <property type="evidence" value="ECO:0007669"/>
    <property type="project" value="UniProtKB-SubCell"/>
</dbReference>
<dbReference type="GO" id="GO:0005741">
    <property type="term" value="C:mitochondrial outer membrane"/>
    <property type="evidence" value="ECO:0000318"/>
    <property type="project" value="GO_Central"/>
</dbReference>
<dbReference type="GO" id="GO:0005886">
    <property type="term" value="C:plasma membrane"/>
    <property type="evidence" value="ECO:0000250"/>
    <property type="project" value="UniProtKB"/>
</dbReference>
<dbReference type="GO" id="GO:0140485">
    <property type="term" value="F:5-aminolevulinic acid transmembrane transporter activity"/>
    <property type="evidence" value="ECO:0000250"/>
    <property type="project" value="UniProtKB"/>
</dbReference>
<dbReference type="GO" id="GO:0015485">
    <property type="term" value="F:cholesterol binding"/>
    <property type="evidence" value="ECO:0007669"/>
    <property type="project" value="Ensembl"/>
</dbReference>
<dbReference type="GO" id="GO:0140484">
    <property type="term" value="P:5-aminolevulinic acid import across plasma membrane"/>
    <property type="evidence" value="ECO:0000250"/>
    <property type="project" value="UniProtKB"/>
</dbReference>
<dbReference type="GO" id="GO:0043353">
    <property type="term" value="P:enucleate erythrocyte differentiation"/>
    <property type="evidence" value="ECO:0000315"/>
    <property type="project" value="UniProtKB"/>
</dbReference>
<dbReference type="GO" id="GO:0098739">
    <property type="term" value="P:import across plasma membrane"/>
    <property type="evidence" value="ECO:0000250"/>
    <property type="project" value="UniProtKB"/>
</dbReference>
<dbReference type="GO" id="GO:0032367">
    <property type="term" value="P:intracellular cholesterol transport"/>
    <property type="evidence" value="ECO:0000315"/>
    <property type="project" value="UniProtKB"/>
</dbReference>
<dbReference type="GO" id="GO:0034389">
    <property type="term" value="P:lipid droplet organization"/>
    <property type="evidence" value="ECO:0000315"/>
    <property type="project" value="UniProtKB"/>
</dbReference>
<dbReference type="CDD" id="cd15904">
    <property type="entry name" value="TSPO_MBR"/>
    <property type="match status" value="1"/>
</dbReference>
<dbReference type="FunFam" id="1.20.1260.100:FF:000001">
    <property type="entry name" value="translocator protein 2"/>
    <property type="match status" value="1"/>
</dbReference>
<dbReference type="Gene3D" id="1.20.1260.100">
    <property type="entry name" value="TspO/MBR protein"/>
    <property type="match status" value="1"/>
</dbReference>
<dbReference type="InterPro" id="IPR038330">
    <property type="entry name" value="TspO/MBR-related_sf"/>
</dbReference>
<dbReference type="InterPro" id="IPR004307">
    <property type="entry name" value="TspO_MBR"/>
</dbReference>
<dbReference type="PANTHER" id="PTHR10057">
    <property type="entry name" value="PERIPHERAL-TYPE BENZODIAZEPINE RECEPTOR"/>
    <property type="match status" value="1"/>
</dbReference>
<dbReference type="PANTHER" id="PTHR10057:SF4">
    <property type="entry name" value="TRANSLOCATOR PROTEIN 2"/>
    <property type="match status" value="1"/>
</dbReference>
<dbReference type="Pfam" id="PF03073">
    <property type="entry name" value="TspO_MBR"/>
    <property type="match status" value="1"/>
</dbReference>
<dbReference type="PIRSF" id="PIRSF005859">
    <property type="entry name" value="PBR"/>
    <property type="match status" value="1"/>
</dbReference>
<protein>
    <recommendedName>
        <fullName evidence="5">Translocator protein 2</fullName>
    </recommendedName>
</protein>
<name>TSPO2_CANLF</name>
<reference evidence="7 8 9" key="1">
    <citation type="journal article" date="2020" name="J. Biol. Chem.">
        <title>Cholesterol-binding protein TSPO2 coordinates maturation and proliferation of terminally differentiating erythroblasts.</title>
        <authorList>
            <person name="Kiatpakdee B."/>
            <person name="Sato K."/>
            <person name="Otsuka Y."/>
            <person name="Arashiki N."/>
            <person name="Chen Y."/>
            <person name="Tsumita T."/>
            <person name="Otsu W."/>
            <person name="Yamamoto A."/>
            <person name="Kawata R."/>
            <person name="Yamazaki J."/>
            <person name="Sugimoto Y."/>
            <person name="Takada K."/>
            <person name="Mohandas N."/>
            <person name="Inaba M."/>
        </authorList>
    </citation>
    <scope>NUCLEOTIDE SEQUENCE [MRNA]</scope>
    <scope>FUNCTION</scope>
    <scope>SUBCELLULAR LOCATION</scope>
    <scope>TISSUE SPECIFICITY</scope>
    <scope>CHARACTERIZATION OF VARIANTS HK TYR-40; PHE-89; PHE-98 DEL AND ILE-120</scope>
</reference>
<reference evidence="10" key="2">
    <citation type="journal article" date="2005" name="Nature">
        <title>Genome sequence, comparative analysis and haplotype structure of the domestic dog.</title>
        <authorList>
            <person name="Lindblad-Toh K."/>
            <person name="Wade C.M."/>
            <person name="Mikkelsen T.S."/>
            <person name="Karlsson E.K."/>
            <person name="Jaffe D.B."/>
            <person name="Kamal M."/>
            <person name="Clamp M."/>
            <person name="Chang J.L."/>
            <person name="Kulbokas E.J. III"/>
            <person name="Zody M.C."/>
            <person name="Mauceli E."/>
            <person name="Xie X."/>
            <person name="Breen M."/>
            <person name="Wayne R.K."/>
            <person name="Ostrander E.A."/>
            <person name="Ponting C.P."/>
            <person name="Galibert F."/>
            <person name="Smith D.R."/>
            <person name="deJong P.J."/>
            <person name="Kirkness E.F."/>
            <person name="Alvarez P."/>
            <person name="Biagi T."/>
            <person name="Brockman W."/>
            <person name="Butler J."/>
            <person name="Chin C.-W."/>
            <person name="Cook A."/>
            <person name="Cuff J."/>
            <person name="Daly M.J."/>
            <person name="DeCaprio D."/>
            <person name="Gnerre S."/>
            <person name="Grabherr M."/>
            <person name="Kellis M."/>
            <person name="Kleber M."/>
            <person name="Bardeleben C."/>
            <person name="Goodstadt L."/>
            <person name="Heger A."/>
            <person name="Hitte C."/>
            <person name="Kim L."/>
            <person name="Koepfli K.-P."/>
            <person name="Parker H.G."/>
            <person name="Pollinger J.P."/>
            <person name="Searle S.M.J."/>
            <person name="Sutter N.B."/>
            <person name="Thomas R."/>
            <person name="Webber C."/>
            <person name="Baldwin J."/>
            <person name="Abebe A."/>
            <person name="Abouelleil A."/>
            <person name="Aftuck L."/>
            <person name="Ait-Zahra M."/>
            <person name="Aldredge T."/>
            <person name="Allen N."/>
            <person name="An P."/>
            <person name="Anderson S."/>
            <person name="Antoine C."/>
            <person name="Arachchi H."/>
            <person name="Aslam A."/>
            <person name="Ayotte L."/>
            <person name="Bachantsang P."/>
            <person name="Barry A."/>
            <person name="Bayul T."/>
            <person name="Benamara M."/>
            <person name="Berlin A."/>
            <person name="Bessette D."/>
            <person name="Blitshteyn B."/>
            <person name="Bloom T."/>
            <person name="Blye J."/>
            <person name="Boguslavskiy L."/>
            <person name="Bonnet C."/>
            <person name="Boukhgalter B."/>
            <person name="Brown A."/>
            <person name="Cahill P."/>
            <person name="Calixte N."/>
            <person name="Camarata J."/>
            <person name="Cheshatsang Y."/>
            <person name="Chu J."/>
            <person name="Citroen M."/>
            <person name="Collymore A."/>
            <person name="Cooke P."/>
            <person name="Dawoe T."/>
            <person name="Daza R."/>
            <person name="Decktor K."/>
            <person name="DeGray S."/>
            <person name="Dhargay N."/>
            <person name="Dooley K."/>
            <person name="Dooley K."/>
            <person name="Dorje P."/>
            <person name="Dorjee K."/>
            <person name="Dorris L."/>
            <person name="Duffey N."/>
            <person name="Dupes A."/>
            <person name="Egbiremolen O."/>
            <person name="Elong R."/>
            <person name="Falk J."/>
            <person name="Farina A."/>
            <person name="Faro S."/>
            <person name="Ferguson D."/>
            <person name="Ferreira P."/>
            <person name="Fisher S."/>
            <person name="FitzGerald M."/>
            <person name="Foley K."/>
            <person name="Foley C."/>
            <person name="Franke A."/>
            <person name="Friedrich D."/>
            <person name="Gage D."/>
            <person name="Garber M."/>
            <person name="Gearin G."/>
            <person name="Giannoukos G."/>
            <person name="Goode T."/>
            <person name="Goyette A."/>
            <person name="Graham J."/>
            <person name="Grandbois E."/>
            <person name="Gyaltsen K."/>
            <person name="Hafez N."/>
            <person name="Hagopian D."/>
            <person name="Hagos B."/>
            <person name="Hall J."/>
            <person name="Healy C."/>
            <person name="Hegarty R."/>
            <person name="Honan T."/>
            <person name="Horn A."/>
            <person name="Houde N."/>
            <person name="Hughes L."/>
            <person name="Hunnicutt L."/>
            <person name="Husby M."/>
            <person name="Jester B."/>
            <person name="Jones C."/>
            <person name="Kamat A."/>
            <person name="Kanga B."/>
            <person name="Kells C."/>
            <person name="Khazanovich D."/>
            <person name="Kieu A.C."/>
            <person name="Kisner P."/>
            <person name="Kumar M."/>
            <person name="Lance K."/>
            <person name="Landers T."/>
            <person name="Lara M."/>
            <person name="Lee W."/>
            <person name="Leger J.-P."/>
            <person name="Lennon N."/>
            <person name="Leuper L."/>
            <person name="LeVine S."/>
            <person name="Liu J."/>
            <person name="Liu X."/>
            <person name="Lokyitsang Y."/>
            <person name="Lokyitsang T."/>
            <person name="Lui A."/>
            <person name="Macdonald J."/>
            <person name="Major J."/>
            <person name="Marabella R."/>
            <person name="Maru K."/>
            <person name="Matthews C."/>
            <person name="McDonough S."/>
            <person name="Mehta T."/>
            <person name="Meldrim J."/>
            <person name="Melnikov A."/>
            <person name="Meneus L."/>
            <person name="Mihalev A."/>
            <person name="Mihova T."/>
            <person name="Miller K."/>
            <person name="Mittelman R."/>
            <person name="Mlenga V."/>
            <person name="Mulrain L."/>
            <person name="Munson G."/>
            <person name="Navidi A."/>
            <person name="Naylor J."/>
            <person name="Nguyen T."/>
            <person name="Nguyen N."/>
            <person name="Nguyen C."/>
            <person name="Nguyen T."/>
            <person name="Nicol R."/>
            <person name="Norbu N."/>
            <person name="Norbu C."/>
            <person name="Novod N."/>
            <person name="Nyima T."/>
            <person name="Olandt P."/>
            <person name="O'Neill B."/>
            <person name="O'Neill K."/>
            <person name="Osman S."/>
            <person name="Oyono L."/>
            <person name="Patti C."/>
            <person name="Perrin D."/>
            <person name="Phunkhang P."/>
            <person name="Pierre F."/>
            <person name="Priest M."/>
            <person name="Rachupka A."/>
            <person name="Raghuraman S."/>
            <person name="Rameau R."/>
            <person name="Ray V."/>
            <person name="Raymond C."/>
            <person name="Rege F."/>
            <person name="Rise C."/>
            <person name="Rogers J."/>
            <person name="Rogov P."/>
            <person name="Sahalie J."/>
            <person name="Settipalli S."/>
            <person name="Sharpe T."/>
            <person name="Shea T."/>
            <person name="Sheehan M."/>
            <person name="Sherpa N."/>
            <person name="Shi J."/>
            <person name="Shih D."/>
            <person name="Sloan J."/>
            <person name="Smith C."/>
            <person name="Sparrow T."/>
            <person name="Stalker J."/>
            <person name="Stange-Thomann N."/>
            <person name="Stavropoulos S."/>
            <person name="Stone C."/>
            <person name="Stone S."/>
            <person name="Sykes S."/>
            <person name="Tchuinga P."/>
            <person name="Tenzing P."/>
            <person name="Tesfaye S."/>
            <person name="Thoulutsang D."/>
            <person name="Thoulutsang Y."/>
            <person name="Topham K."/>
            <person name="Topping I."/>
            <person name="Tsamla T."/>
            <person name="Vassiliev H."/>
            <person name="Venkataraman V."/>
            <person name="Vo A."/>
            <person name="Wangchuk T."/>
            <person name="Wangdi T."/>
            <person name="Weiand M."/>
            <person name="Wilkinson J."/>
            <person name="Wilson A."/>
            <person name="Yadav S."/>
            <person name="Yang S."/>
            <person name="Yang X."/>
            <person name="Young G."/>
            <person name="Yu Q."/>
            <person name="Zainoun J."/>
            <person name="Zembek L."/>
            <person name="Zimmer A."/>
            <person name="Lander E.S."/>
        </authorList>
    </citation>
    <scope>NUCLEOTIDE SEQUENCE [LARGE SCALE GENOMIC DNA]</scope>
    <source>
        <strain evidence="10">Boxer</strain>
    </source>
</reference>
<feature type="chain" id="PRO_0000451410" description="Translocator protein 2">
    <location>
        <begin position="1"/>
        <end position="172"/>
    </location>
</feature>
<feature type="transmembrane region" description="Helical" evidence="3">
    <location>
        <begin position="3"/>
        <end position="23"/>
    </location>
</feature>
<feature type="transmembrane region" description="Helical" evidence="3">
    <location>
        <begin position="45"/>
        <end position="65"/>
    </location>
</feature>
<feature type="transmembrane region" description="Helical" evidence="3">
    <location>
        <begin position="80"/>
        <end position="100"/>
    </location>
</feature>
<feature type="transmembrane region" description="Helical" evidence="3">
    <location>
        <begin position="104"/>
        <end position="124"/>
    </location>
</feature>
<feature type="transmembrane region" description="Helical" evidence="3">
    <location>
        <begin position="130"/>
        <end position="150"/>
    </location>
</feature>
<feature type="sequence variant" description="In HK; decreases TSPO2 expression levels. Abnormal chromosome condensation and chromosome segregation in differentiating erythrocytes, resulting in abnormal cytokinesis and differentiation." evidence="4">
    <original>C</original>
    <variation>Y</variation>
    <location>
        <position position="40"/>
    </location>
</feature>
<feature type="sequence variant" description="In HK; associated in cis with F-98 DEL and I-120; decreases TSPO2 expression levels." evidence="4">
    <original>V</original>
    <variation>F</variation>
    <location>
        <position position="89"/>
    </location>
</feature>
<feature type="sequence variant" description="In HK; associated in cis with F-89 and I-120; decreases TSPO2 expression levels." evidence="4">
    <location>
        <position position="98"/>
    </location>
</feature>
<feature type="sequence variant" description="In HK; associated in cis with F-89 and F-98 DEL; decreases TSPO2 expression levels." evidence="4">
    <original>T</original>
    <variation>I</variation>
    <location>
        <position position="120"/>
    </location>
</feature>
<proteinExistence type="evidence at protein level"/>
<evidence type="ECO:0000250" key="1">
    <source>
        <dbReference type="UniProtKB" id="Q5TGU0"/>
    </source>
</evidence>
<evidence type="ECO:0000250" key="2">
    <source>
        <dbReference type="UniProtKB" id="Q9CRZ8"/>
    </source>
</evidence>
<evidence type="ECO:0000255" key="3"/>
<evidence type="ECO:0000269" key="4">
    <source>
    </source>
</evidence>
<evidence type="ECO:0000303" key="5">
    <source>
    </source>
</evidence>
<evidence type="ECO:0000305" key="6"/>
<evidence type="ECO:0000312" key="7">
    <source>
        <dbReference type="EMBL" id="QJD20749.1"/>
    </source>
</evidence>
<evidence type="ECO:0000312" key="8">
    <source>
        <dbReference type="EMBL" id="QJD20750.1"/>
    </source>
</evidence>
<evidence type="ECO:0000312" key="9">
    <source>
        <dbReference type="EMBL" id="QJD20751.1"/>
    </source>
</evidence>
<evidence type="ECO:0000312" key="10">
    <source>
        <dbReference type="Proteomes" id="UP000002254"/>
    </source>
</evidence>
<sequence>MQPQGAIFVALPHLGPILVSLLTRHRMIRWYDIPKKPPWCPPHKVLLAGWITIYFVMGYASYLVWKDLGGGFGRPLALPLGLYAVQLAVSWAVLIFFFAAHAHGLALLHMLLLYGLVVSTALIWHPINKLAAVLLLPYLAWLTVTASIAYHLWRDSLCPNHHQPLPMGEKRD</sequence>
<keyword id="KW-1003">Cell membrane</keyword>
<keyword id="KW-0225">Disease variant</keyword>
<keyword id="KW-0256">Endoplasmic reticulum</keyword>
<keyword id="KW-0472">Membrane</keyword>
<keyword id="KW-0675">Receptor</keyword>
<keyword id="KW-1185">Reference proteome</keyword>
<keyword id="KW-0812">Transmembrane</keyword>
<keyword id="KW-1133">Transmembrane helix</keyword>
<keyword id="KW-0813">Transport</keyword>
<accession>E2RDM9</accession>
<accession>A0A6M3RDU1</accession>
<accession>A0A6M3RRT7</accession>
<gene>
    <name evidence="5" type="primary">TSPO2</name>
</gene>